<accession>P0C1K2</accession>
<reference key="1">
    <citation type="journal article" date="1994" name="J. Virol.">
        <title>A new subtype of human immunodeficiency virus type 1 (MVP-5180) from Cameroon.</title>
        <authorList>
            <person name="Gurtler L.G."/>
            <person name="Hauser P.H."/>
            <person name="Eberle J."/>
            <person name="von Brunn A."/>
            <person name="Knapp S."/>
            <person name="Zekeng L."/>
            <person name="Tsague J.M."/>
            <person name="Kaptue L."/>
        </authorList>
    </citation>
    <scope>NUCLEOTIDE SEQUENCE [GENOMIC RNA]</scope>
</reference>
<reference key="2">
    <citation type="journal article" date="2005" name="Microbes Infect.">
        <title>Decoding Tat: the biology of HIV Tat posttranslational modifications.</title>
        <authorList>
            <person name="Hetzer C."/>
            <person name="Dormeyer W."/>
            <person name="Schnolzer M."/>
            <person name="Ott M."/>
        </authorList>
    </citation>
    <scope>REVIEW</scope>
    <scope>ALTERNATIVE SPLICING</scope>
</reference>
<reference key="3">
    <citation type="journal article" date="2006" name="Front. Biosci.">
        <title>The multiple functions of HIV-1 Tat: proliferation versus apoptosis.</title>
        <authorList>
            <person name="Peruzzi F."/>
        </authorList>
    </citation>
    <scope>REVIEW</scope>
</reference>
<reference key="4">
    <citation type="journal article" date="2006" name="Microbes Infect.">
        <title>HIV tat and neurotoxicity.</title>
        <authorList>
            <person name="King J.E."/>
            <person name="Eugenin E.A."/>
            <person name="Buckner C.M."/>
            <person name="Berman J.W."/>
        </authorList>
    </citation>
    <scope>REVIEW</scope>
</reference>
<organismHost>
    <name type="scientific">Homo sapiens</name>
    <name type="common">Human</name>
    <dbReference type="NCBI Taxonomy" id="9606"/>
</organismHost>
<sequence>MDPVDPEMPPWHHPGSKPQTPCNNCYCKRCCYHCYVCFTKKGLGISHGRKKRRRPAAAASYPDNKDPVPEQHTGRKQKRQEEQEKKVEKETGPSGQPCHQDSCNSCTRISGQ</sequence>
<feature type="chain" id="PRO_0000244854" description="Protein Tat">
    <location>
        <begin position="1"/>
        <end position="112"/>
    </location>
</feature>
<feature type="region of interest" description="Transactivation" evidence="1">
    <location>
        <begin position="1"/>
        <end position="48"/>
    </location>
</feature>
<feature type="region of interest" description="Interaction with human CREBBP" evidence="1">
    <location>
        <begin position="1"/>
        <end position="24"/>
    </location>
</feature>
<feature type="region of interest" description="Cysteine-rich" evidence="1">
    <location>
        <begin position="22"/>
        <end position="37"/>
    </location>
</feature>
<feature type="region of interest" description="Core" evidence="1">
    <location>
        <begin position="38"/>
        <end position="48"/>
    </location>
</feature>
<feature type="region of interest" description="Disordered" evidence="2">
    <location>
        <begin position="45"/>
        <end position="112"/>
    </location>
</feature>
<feature type="region of interest" description="Interaction with the host capping enzyme RNGTT" evidence="1">
    <location>
        <begin position="49"/>
        <end position="82"/>
    </location>
</feature>
<feature type="short sequence motif" description="Nuclear localization signal, RNA-binding (TAR), and protein transduction" evidence="1">
    <location>
        <begin position="49"/>
        <end position="56"/>
    </location>
</feature>
<feature type="compositionally biased region" description="Basic and acidic residues" evidence="2">
    <location>
        <begin position="63"/>
        <end position="91"/>
    </location>
</feature>
<feature type="compositionally biased region" description="Polar residues" evidence="2">
    <location>
        <begin position="93"/>
        <end position="112"/>
    </location>
</feature>
<feature type="binding site" evidence="1">
    <location>
        <position position="22"/>
    </location>
    <ligand>
        <name>Zn(2+)</name>
        <dbReference type="ChEBI" id="CHEBI:29105"/>
        <label>1</label>
    </ligand>
</feature>
<feature type="binding site" evidence="1">
    <location>
        <position position="25"/>
    </location>
    <ligand>
        <name>Zn(2+)</name>
        <dbReference type="ChEBI" id="CHEBI:29105"/>
        <label>2</label>
    </ligand>
</feature>
<feature type="binding site" evidence="1">
    <location>
        <position position="27"/>
    </location>
    <ligand>
        <name>Zn(2+)</name>
        <dbReference type="ChEBI" id="CHEBI:29105"/>
        <label>2</label>
    </ligand>
</feature>
<feature type="binding site" evidence="1">
    <location>
        <position position="30"/>
    </location>
    <ligand>
        <name>Zn(2+)</name>
        <dbReference type="ChEBI" id="CHEBI:29105"/>
        <label>2</label>
    </ligand>
</feature>
<feature type="binding site" evidence="1">
    <location>
        <position position="33"/>
    </location>
    <ligand>
        <name>Zn(2+)</name>
        <dbReference type="ChEBI" id="CHEBI:29105"/>
        <label>1</label>
    </ligand>
</feature>
<feature type="binding site" evidence="1">
    <location>
        <position position="34"/>
    </location>
    <ligand>
        <name>Zn(2+)</name>
        <dbReference type="ChEBI" id="CHEBI:29105"/>
        <label>1</label>
    </ligand>
</feature>
<feature type="binding site" evidence="1">
    <location>
        <position position="37"/>
    </location>
    <ligand>
        <name>Zn(2+)</name>
        <dbReference type="ChEBI" id="CHEBI:29105"/>
        <label>1</label>
    </ligand>
</feature>
<feature type="site" description="Essential for Tat translocation through the endosomal membrane" evidence="1">
    <location>
        <position position="11"/>
    </location>
</feature>
<feature type="modified residue" description="N6-acetyllysine; by host PCAF" evidence="1">
    <location>
        <position position="28"/>
    </location>
</feature>
<feature type="modified residue" description="N6-acetyllysine; by host EP300 and GCN5L2" evidence="1">
    <location>
        <position position="50"/>
    </location>
</feature>
<feature type="modified residue" description="N6-acetyllysine; by host EP300 and GCN5L2" evidence="1">
    <location>
        <position position="51"/>
    </location>
</feature>
<feature type="modified residue" description="Asymmetric dimethylarginine; by host PRMT6" evidence="1">
    <location>
        <position position="52"/>
    </location>
</feature>
<feature type="modified residue" description="Asymmetric dimethylarginine; by host PRMT6" evidence="1">
    <location>
        <position position="53"/>
    </location>
</feature>
<feature type="splice variant" id="VSP_022418" description="In isoform Short.">
    <location>
        <begin position="72"/>
        <end position="112"/>
    </location>
</feature>
<keyword id="KW-0007">Acetylation</keyword>
<keyword id="KW-0010">Activator</keyword>
<keyword id="KW-0014">AIDS</keyword>
<keyword id="KW-0025">Alternative splicing</keyword>
<keyword id="KW-0053">Apoptosis</keyword>
<keyword id="KW-1035">Host cytoplasm</keyword>
<keyword id="KW-1048">Host nucleus</keyword>
<keyword id="KW-0945">Host-virus interaction</keyword>
<keyword id="KW-1090">Inhibition of host innate immune response by virus</keyword>
<keyword id="KW-1114">Inhibition of host interferon signaling pathway by virus</keyword>
<keyword id="KW-0922">Interferon antiviral system evasion</keyword>
<keyword id="KW-1017">Isopeptide bond</keyword>
<keyword id="KW-0479">Metal-binding</keyword>
<keyword id="KW-0488">Methylation</keyword>
<keyword id="KW-1122">Modulation of host chromatin by virus</keyword>
<keyword id="KW-1126">Modulation of host PP1 activity by virus</keyword>
<keyword id="KW-0597">Phosphoprotein</keyword>
<keyword id="KW-0694">RNA-binding</keyword>
<keyword id="KW-0964">Secreted</keyword>
<keyword id="KW-0804">Transcription</keyword>
<keyword id="KW-0805">Transcription regulation</keyword>
<keyword id="KW-0832">Ubl conjugation</keyword>
<keyword id="KW-0899">Viral immunoevasion</keyword>
<keyword id="KW-0862">Zinc</keyword>
<proteinExistence type="inferred from homology"/>
<evidence type="ECO:0000255" key="1">
    <source>
        <dbReference type="HAMAP-Rule" id="MF_04079"/>
    </source>
</evidence>
<evidence type="ECO:0000256" key="2">
    <source>
        <dbReference type="SAM" id="MobiDB-lite"/>
    </source>
</evidence>
<evidence type="ECO:0000305" key="3"/>
<dbReference type="EMBL" id="L20571">
    <property type="status" value="NOT_ANNOTATED_CDS"/>
    <property type="molecule type" value="Genomic_RNA"/>
</dbReference>
<dbReference type="Proteomes" id="UP000007698">
    <property type="component" value="Segment"/>
</dbReference>
<dbReference type="GO" id="GO:0005576">
    <property type="term" value="C:extracellular region"/>
    <property type="evidence" value="ECO:0007669"/>
    <property type="project" value="UniProtKB-SubCell"/>
</dbReference>
<dbReference type="GO" id="GO:0030430">
    <property type="term" value="C:host cell cytoplasm"/>
    <property type="evidence" value="ECO:0007669"/>
    <property type="project" value="UniProtKB-SubCell"/>
</dbReference>
<dbReference type="GO" id="GO:0044196">
    <property type="term" value="C:host cell nucleolus"/>
    <property type="evidence" value="ECO:0007669"/>
    <property type="project" value="UniProtKB-SubCell"/>
</dbReference>
<dbReference type="GO" id="GO:0042805">
    <property type="term" value="F:actinin binding"/>
    <property type="evidence" value="ECO:0007669"/>
    <property type="project" value="UniProtKB-UniRule"/>
</dbReference>
<dbReference type="GO" id="GO:0030332">
    <property type="term" value="F:cyclin binding"/>
    <property type="evidence" value="ECO:0007669"/>
    <property type="project" value="UniProtKB-UniRule"/>
</dbReference>
<dbReference type="GO" id="GO:0046872">
    <property type="term" value="F:metal ion binding"/>
    <property type="evidence" value="ECO:0007669"/>
    <property type="project" value="UniProtKB-UniRule"/>
</dbReference>
<dbReference type="GO" id="GO:0019904">
    <property type="term" value="F:protein domain specific binding"/>
    <property type="evidence" value="ECO:0007669"/>
    <property type="project" value="UniProtKB-UniRule"/>
</dbReference>
<dbReference type="GO" id="GO:0004865">
    <property type="term" value="F:protein serine/threonine phosphatase inhibitor activity"/>
    <property type="evidence" value="ECO:0007669"/>
    <property type="project" value="UniProtKB-KW"/>
</dbReference>
<dbReference type="GO" id="GO:0001070">
    <property type="term" value="F:RNA-binding transcription regulator activity"/>
    <property type="evidence" value="ECO:0007669"/>
    <property type="project" value="UniProtKB-UniRule"/>
</dbReference>
<dbReference type="GO" id="GO:1990970">
    <property type="term" value="F:trans-activation response element binding"/>
    <property type="evidence" value="ECO:0007669"/>
    <property type="project" value="UniProtKB-UniRule"/>
</dbReference>
<dbReference type="GO" id="GO:0006351">
    <property type="term" value="P:DNA-templated transcription"/>
    <property type="evidence" value="ECO:0007669"/>
    <property type="project" value="UniProtKB-UniRule"/>
</dbReference>
<dbReference type="GO" id="GO:0032968">
    <property type="term" value="P:positive regulation of transcription elongation by RNA polymerase II"/>
    <property type="evidence" value="ECO:0007669"/>
    <property type="project" value="UniProtKB-UniRule"/>
</dbReference>
<dbReference type="GO" id="GO:0050434">
    <property type="term" value="P:positive regulation of viral transcription"/>
    <property type="evidence" value="ECO:0007669"/>
    <property type="project" value="UniProtKB-UniRule"/>
</dbReference>
<dbReference type="GO" id="GO:0039525">
    <property type="term" value="P:symbiont-mediated perturbation of host chromatin organization"/>
    <property type="evidence" value="ECO:0007669"/>
    <property type="project" value="UniProtKB-UniRule"/>
</dbReference>
<dbReference type="GO" id="GO:0052170">
    <property type="term" value="P:symbiont-mediated suppression of host innate immune response"/>
    <property type="evidence" value="ECO:0007669"/>
    <property type="project" value="UniProtKB-KW"/>
</dbReference>
<dbReference type="GO" id="GO:0039606">
    <property type="term" value="P:symbiont-mediated suppression of host translation initiation"/>
    <property type="evidence" value="ECO:0007669"/>
    <property type="project" value="UniProtKB-KW"/>
</dbReference>
<dbReference type="GO" id="GO:0039502">
    <property type="term" value="P:symbiont-mediated suppression of host type I interferon-mediated signaling pathway"/>
    <property type="evidence" value="ECO:0007669"/>
    <property type="project" value="UniProtKB-UniRule"/>
</dbReference>
<dbReference type="Gene3D" id="4.10.20.10">
    <property type="entry name" value="Tat domain"/>
    <property type="match status" value="1"/>
</dbReference>
<dbReference type="HAMAP" id="MF_04079">
    <property type="entry name" value="HIV_TAT"/>
    <property type="match status" value="1"/>
</dbReference>
<dbReference type="InterPro" id="IPR001831">
    <property type="entry name" value="IV_Tat"/>
</dbReference>
<dbReference type="InterPro" id="IPR036963">
    <property type="entry name" value="Tat_dom_sf"/>
</dbReference>
<dbReference type="Pfam" id="PF00539">
    <property type="entry name" value="Tat"/>
    <property type="match status" value="1"/>
</dbReference>
<dbReference type="PRINTS" id="PR00055">
    <property type="entry name" value="HIVTATDOMAIN"/>
</dbReference>
<organism>
    <name type="scientific">Human immunodeficiency virus type 1 group O (isolate MVP5180)</name>
    <name type="common">HIV-1</name>
    <dbReference type="NCBI Taxonomy" id="388816"/>
    <lineage>
        <taxon>Viruses</taxon>
        <taxon>Riboviria</taxon>
        <taxon>Pararnavirae</taxon>
        <taxon>Artverviricota</taxon>
        <taxon>Revtraviricetes</taxon>
        <taxon>Ortervirales</taxon>
        <taxon>Retroviridae</taxon>
        <taxon>Orthoretrovirinae</taxon>
        <taxon>Lentivirus</taxon>
        <taxon>Human immunodeficiency virus type 1</taxon>
    </lineage>
</organism>
<protein>
    <recommendedName>
        <fullName evidence="1">Protein Tat</fullName>
    </recommendedName>
    <alternativeName>
        <fullName evidence="1">Transactivating regulatory protein</fullName>
    </alternativeName>
</protein>
<gene>
    <name evidence="1" type="primary">tat</name>
</gene>
<comment type="function">
    <text evidence="1">Transcriptional activator that increases RNA Pol II processivity, thereby increasing the level of full-length viral transcripts. Recognizes a hairpin structure at the 5'-LTR of the nascent viral mRNAs referred to as the transactivation responsive RNA element (TAR) and recruits the cyclin T1-CDK9 complex (P-TEFb complex) that will in turn hyperphosphorylate the RNA polymerase II to allow efficient elongation. The CDK9 component of P-TEFb and other Tat-activated kinases hyperphosphorylate the C-terminus of RNA Pol II that becomes stabilized and much more processive. Other factors such as HTATSF1/Tat-SF1, SUPT5H/SPT5, and HTATIP2 are also important for Tat's function. Besides its effect on RNA Pol II processivity, Tat induces chromatin remodeling of proviral genes by recruiting the histone acetyltransferases (HATs) CREBBP, EP300 and PCAF to the chromatin. This also contributes to the increase in proviral transcription rate, especially when the provirus integrates in transcriptionally silent region of the host genome. To ensure maximal activation of the LTR, Tat mediates nuclear translocation of NF-kappa-B by interacting with host RELA. Through its interaction with host TBP, Tat may also modulate transcription initiation. Tat can reactivate a latently infected cell by penetrating in it and transactivating its LTR promoter. In the cytoplasm, Tat is thought to act as a translational activator of HIV-1 mRNAs.</text>
</comment>
<comment type="function">
    <text evidence="1">Extracellular circulating Tat can be endocytosed by surrounding uninfected cells via the binding to several surface receptors such as CD26, CXCR4, heparan sulfate proteoglycans (HSPG) or LDLR. Neurons are rarely infected, but they internalize Tat via their LDLR. Through its interaction with nuclear HATs, Tat is potentially able to control the acetylation-dependent cellular gene expression. Modulates the expression of many cellular genes involved in cell survival, proliferation or in coding for cytokines or cytokine receptors. Tat plays a role in T-cell and neurons apoptosis. Tat induced neurotoxicity and apoptosis probably contribute to neuroAIDS. Circulating Tat also acts as a chemokine-like and/or growth factor-like molecule that binds to specific receptors on the surface of the cells, affecting many cellular pathways. In the vascular system, Tat binds to ITGAV/ITGB3 and ITGA5/ITGB1 integrins dimers at the surface of endothelial cells and competes with bFGF for heparin-binding sites, leading to an excess of soluble bFGF.</text>
</comment>
<comment type="subunit">
    <text evidence="1">Interacts with host CCNT1. Associates with the P-TEFb complex composed at least of Tat, P-TEFb (CDK9 and CCNT1), TAR RNA, RNA Pol II. Recruits the HATs CREBBP, TAF1/TFIID, EP300, PCAF and GCN5L2. Interacts with host KAT5/Tip60; this interaction targets the latter to degradation. Interacts with the host deacetylase SIRT1. Interacts with host capping enzyme RNGTT; this interaction stimulates RNGTT. Binds to host KDR, and to the host integrins ITGAV/ITGB3 and ITGA5/ITGB1. Interacts with host KPNB1/importin beta-1 without previous binding to KPNA1/importin alpha-1. Interacts with EIF2AK2. Interacts with host nucleosome assembly protein NAP1L1; this interaction may be required for the transport of Tat within the nucleus, since the two proteins interact at the nuclear rim. Interacts with host C1QBP/SF2P32; this interaction involves lysine-acetylated Tat. Interacts with the host chemokine receptors CCR2, CCR3 and CXCR4. Interacts with host DPP4/CD26; this interaction may trigger an anti-proliferative effect. Interacts with host LDLR. Interacts with the host extracellular matrix metalloproteinase MMP1. Interacts with host PRMT6; this interaction mediates Tat's methylation. Interacts with, and is ubiquitinated by MDM2/Hdm2. Interacts with host PSMC3 and HTATIP2. Interacts with STAB1; this interaction may overcome SATB1-mediated repression of IL2 and IL2RA (interleukin) in T cells by binding to the same domain than HDAC1. Interacts (when acetylated) with human CDK13, thereby increasing HIV-1 mRNA splicing and promoting the production of the doubly spliced HIV-1 protein Nef. Interacts with host TBP; this interaction modulates the activity of transcriptional pre-initiation complex. Interacts with host RELA. Interacts with host PLSCR1; this interaction negatively regulates Tat transactivation activity by altering its subcellular distribution.</text>
</comment>
<comment type="subcellular location">
    <subcellularLocation>
        <location evidence="1">Host nucleus</location>
        <location evidence="1">Host nucleolus</location>
    </subcellularLocation>
    <subcellularLocation>
        <location evidence="1">Host cytoplasm</location>
    </subcellularLocation>
    <subcellularLocation>
        <location evidence="1">Secreted</location>
    </subcellularLocation>
    <text evidence="1">Probably localizes to both nuclear and nucleolar compartments. Nuclear localization is mediated through the interaction of the nuclear localization signal with importin KPNB1. Secretion occurs through a Golgi-independent pathway. Tat is released from infected cells to the extracellular space where it remains associated to the cell membrane, or is secreted into the cerebrospinal fluid and sera. Extracellular Tat can be endocytosed by surrounding uninfected cells via binding to several receptors depending on the cell type.</text>
</comment>
<comment type="alternative products">
    <event type="alternative splicing"/>
    <isoform>
        <id>P0C1K2-1</id>
        <name>Long</name>
        <sequence type="displayed"/>
    </isoform>
    <isoform>
        <id>P0C1K2-2</id>
        <name>Short</name>
        <sequence type="described" ref="VSP_022418"/>
    </isoform>
</comment>
<comment type="domain">
    <text evidence="1">The cell attachment site mediates the interaction with ITGAV/ITGB3 and ITGA5/ITGB1 integrins, leading to vascular cell migration and invasion. This interaction also provides endothelial cells with the adhesion signal they require to grow in response to mitogens.</text>
</comment>
<comment type="domain">
    <text evidence="1">The Cys-rich region may bind 2 zinc ions. This region is involved in binding to KAT5.</text>
</comment>
<comment type="domain">
    <text evidence="1">The transactivation domain mediates the interaction with CCNT1, GCN5L2, and MDM2.</text>
</comment>
<comment type="domain">
    <text evidence="1">The Arg-rich RNA-binding region binds the TAR RNA. This region also mediates the nuclear localization through direct binding to KPNB1 and is involved in Tat's transfer across cell membranes (protein transduction). The same region is required for the interaction with EP300, PCAF, EIF2AK2 and KDR.</text>
</comment>
<comment type="PTM">
    <text evidence="1">Asymmetrical arginine methylation by host PRMT6 seems to diminish the transactivation capacity of Tat and affects the interaction with host CCNT1.</text>
</comment>
<comment type="PTM">
    <text evidence="1">Acetylation by EP300, CREBBP, GCN5L2/GCN5 and PCAF regulates the transactivation activity of Tat. EP300-mediated acetylation of Lys-50 promotes dissociation of Tat from the TAR RNA through the competitive binding to PCAF's bromodomain. In addition, the non-acetylated Tat's N-terminus can also interact with PCAF. PCAF-mediated acetylation of Lys-28 enhances Tat's binding to CCNT1. Lys-50 is deacetylated by SIRT1.</text>
</comment>
<comment type="PTM">
    <text evidence="1">Polyubiquitination by host MDM2 does not target Tat to degradation, but activates its transactivation function and fosters interaction with CCNT1 and TAR RNA.</text>
</comment>
<comment type="PTM">
    <text evidence="1">Phosphorylated by EIF2AK2 on serine and threonine residues adjacent to the basic region important for TAR RNA binding and function. Phosphorylation of Tat by EIF2AK2 is dependent on the prior activation of EIF2AK2 by dsRNA.</text>
</comment>
<comment type="miscellaneous">
    <text evidence="1">HIV-1 lineages are divided in three main groups, M (for Major), O (for Outlier), and N (for New, or Non-M, Non-O). The vast majority of strains found worldwide belong to the group M. Group O seems to be endemic to and largely confined to Cameroon and neighboring countries in West Central Africa, where these viruses represent a small minority of HIV-1 strains. The group N is represented by a limited number of isolates from Cameroonian persons. The group M is further subdivided in 9 clades or subtypes (A to D, F to H, J and K).</text>
</comment>
<comment type="miscellaneous">
    <molecule>Isoform Short</molecule>
    <text evidence="3">Expressed in the late stage of the infection cycle, when unspliced viral RNAs are exported to the cytoplasm by the viral Rev protein.</text>
</comment>
<comment type="similarity">
    <text evidence="1">Belongs to the lentiviruses Tat family.</text>
</comment>
<name>TAT_HV1MV</name>